<name>PLSX_GLOVI</name>
<accession>Q7NMG6</accession>
<evidence type="ECO:0000255" key="1">
    <source>
        <dbReference type="HAMAP-Rule" id="MF_00019"/>
    </source>
</evidence>
<feature type="chain" id="PRO_0000189884" description="Phosphate acyltransferase">
    <location>
        <begin position="1"/>
        <end position="338"/>
    </location>
</feature>
<sequence length="338" mass="36062">MNGWEKTVRIAIDAMGGDYAPQEIVQGALLARAQLGVDIVLVGSAEAVLPELRRHNAAQSVEIVDAPEQVGMGEEPTIVRRKPNSSIMVTMDLVKQGRAEAAVAAGNTGAAMAAALFRIGRLPGIERPAIGAMLPTLKLGKRVLLLDVGANTDSRPRFLEQFALMGALYSRYVLGVAEPKVGLLNIGEERGKGNELVADAYEMLVKNPHVPFAGNCEGRDVMTGRFDVVVCDGFMGNVLLKFAEGVGLVALQILREELPRGIPGKIGIALMRNNLGQVKQRMDYAAYGGGLLLGVNGVCIIAHGSSKAQGILSAIRLAKEALDNRVLERIQQQLILPM</sequence>
<keyword id="KW-0963">Cytoplasm</keyword>
<keyword id="KW-0444">Lipid biosynthesis</keyword>
<keyword id="KW-0443">Lipid metabolism</keyword>
<keyword id="KW-0594">Phospholipid biosynthesis</keyword>
<keyword id="KW-1208">Phospholipid metabolism</keyword>
<keyword id="KW-1185">Reference proteome</keyword>
<keyword id="KW-0808">Transferase</keyword>
<reference key="1">
    <citation type="journal article" date="2003" name="DNA Res.">
        <title>Complete genome structure of Gloeobacter violaceus PCC 7421, a cyanobacterium that lacks thylakoids.</title>
        <authorList>
            <person name="Nakamura Y."/>
            <person name="Kaneko T."/>
            <person name="Sato S."/>
            <person name="Mimuro M."/>
            <person name="Miyashita H."/>
            <person name="Tsuchiya T."/>
            <person name="Sasamoto S."/>
            <person name="Watanabe A."/>
            <person name="Kawashima K."/>
            <person name="Kishida Y."/>
            <person name="Kiyokawa C."/>
            <person name="Kohara M."/>
            <person name="Matsumoto M."/>
            <person name="Matsuno A."/>
            <person name="Nakazaki N."/>
            <person name="Shimpo S."/>
            <person name="Takeuchi C."/>
            <person name="Yamada M."/>
            <person name="Tabata S."/>
        </authorList>
    </citation>
    <scope>NUCLEOTIDE SEQUENCE [LARGE SCALE GENOMIC DNA]</scope>
    <source>
        <strain>ATCC 29082 / PCC 7421</strain>
    </source>
</reference>
<dbReference type="EC" id="2.3.1.274" evidence="1"/>
<dbReference type="EMBL" id="BA000045">
    <property type="protein sequence ID" value="BAC88741.1"/>
    <property type="molecule type" value="Genomic_DNA"/>
</dbReference>
<dbReference type="RefSeq" id="NP_923746.1">
    <property type="nucleotide sequence ID" value="NC_005125.1"/>
</dbReference>
<dbReference type="SMR" id="Q7NMG6"/>
<dbReference type="STRING" id="251221.gene:10758277"/>
<dbReference type="EnsemblBacteria" id="BAC88741">
    <property type="protein sequence ID" value="BAC88741"/>
    <property type="gene ID" value="BAC88741"/>
</dbReference>
<dbReference type="KEGG" id="gvi:gll0800"/>
<dbReference type="PATRIC" id="fig|251221.4.peg.817"/>
<dbReference type="eggNOG" id="COG0416">
    <property type="taxonomic scope" value="Bacteria"/>
</dbReference>
<dbReference type="HOGENOM" id="CLU_039379_1_1_3"/>
<dbReference type="InParanoid" id="Q7NMG6"/>
<dbReference type="OrthoDB" id="9806408at2"/>
<dbReference type="PhylomeDB" id="Q7NMG6"/>
<dbReference type="UniPathway" id="UPA00085"/>
<dbReference type="Proteomes" id="UP000000557">
    <property type="component" value="Chromosome"/>
</dbReference>
<dbReference type="GO" id="GO:0005737">
    <property type="term" value="C:cytoplasm"/>
    <property type="evidence" value="ECO:0007669"/>
    <property type="project" value="UniProtKB-SubCell"/>
</dbReference>
<dbReference type="GO" id="GO:0043811">
    <property type="term" value="F:phosphate:acyl-[acyl carrier protein] acyltransferase activity"/>
    <property type="evidence" value="ECO:0007669"/>
    <property type="project" value="UniProtKB-UniRule"/>
</dbReference>
<dbReference type="GO" id="GO:0006633">
    <property type="term" value="P:fatty acid biosynthetic process"/>
    <property type="evidence" value="ECO:0007669"/>
    <property type="project" value="UniProtKB-UniRule"/>
</dbReference>
<dbReference type="GO" id="GO:0008654">
    <property type="term" value="P:phospholipid biosynthetic process"/>
    <property type="evidence" value="ECO:0007669"/>
    <property type="project" value="UniProtKB-KW"/>
</dbReference>
<dbReference type="Gene3D" id="3.40.718.10">
    <property type="entry name" value="Isopropylmalate Dehydrogenase"/>
    <property type="match status" value="1"/>
</dbReference>
<dbReference type="HAMAP" id="MF_00019">
    <property type="entry name" value="PlsX"/>
    <property type="match status" value="1"/>
</dbReference>
<dbReference type="InterPro" id="IPR003664">
    <property type="entry name" value="FA_synthesis"/>
</dbReference>
<dbReference type="InterPro" id="IPR012281">
    <property type="entry name" value="Phospholipid_synth_PlsX-like"/>
</dbReference>
<dbReference type="NCBIfam" id="TIGR00182">
    <property type="entry name" value="plsX"/>
    <property type="match status" value="1"/>
</dbReference>
<dbReference type="PANTHER" id="PTHR30100">
    <property type="entry name" value="FATTY ACID/PHOSPHOLIPID SYNTHESIS PROTEIN PLSX"/>
    <property type="match status" value="1"/>
</dbReference>
<dbReference type="PANTHER" id="PTHR30100:SF1">
    <property type="entry name" value="PHOSPHATE ACYLTRANSFERASE"/>
    <property type="match status" value="1"/>
</dbReference>
<dbReference type="Pfam" id="PF02504">
    <property type="entry name" value="FA_synthesis"/>
    <property type="match status" value="1"/>
</dbReference>
<dbReference type="PIRSF" id="PIRSF002465">
    <property type="entry name" value="Phsphlp_syn_PlsX"/>
    <property type="match status" value="1"/>
</dbReference>
<dbReference type="SUPFAM" id="SSF53659">
    <property type="entry name" value="Isocitrate/Isopropylmalate dehydrogenase-like"/>
    <property type="match status" value="1"/>
</dbReference>
<proteinExistence type="inferred from homology"/>
<protein>
    <recommendedName>
        <fullName evidence="1">Phosphate acyltransferase</fullName>
        <ecNumber evidence="1">2.3.1.274</ecNumber>
    </recommendedName>
    <alternativeName>
        <fullName evidence="1">Acyl-ACP phosphotransacylase</fullName>
    </alternativeName>
    <alternativeName>
        <fullName evidence="1">Acyl-[acyl-carrier-protein]--phosphate acyltransferase</fullName>
    </alternativeName>
    <alternativeName>
        <fullName evidence="1">Phosphate-acyl-ACP acyltransferase</fullName>
    </alternativeName>
</protein>
<gene>
    <name evidence="1" type="primary">plsX</name>
    <name type="ordered locus">gll0800</name>
</gene>
<comment type="function">
    <text evidence="1">Catalyzes the reversible formation of acyl-phosphate (acyl-PO(4)) from acyl-[acyl-carrier-protein] (acyl-ACP). This enzyme utilizes acyl-ACP as fatty acyl donor, but not acyl-CoA.</text>
</comment>
<comment type="catalytic activity">
    <reaction evidence="1">
        <text>a fatty acyl-[ACP] + phosphate = an acyl phosphate + holo-[ACP]</text>
        <dbReference type="Rhea" id="RHEA:42292"/>
        <dbReference type="Rhea" id="RHEA-COMP:9685"/>
        <dbReference type="Rhea" id="RHEA-COMP:14125"/>
        <dbReference type="ChEBI" id="CHEBI:43474"/>
        <dbReference type="ChEBI" id="CHEBI:59918"/>
        <dbReference type="ChEBI" id="CHEBI:64479"/>
        <dbReference type="ChEBI" id="CHEBI:138651"/>
        <dbReference type="EC" id="2.3.1.274"/>
    </reaction>
</comment>
<comment type="pathway">
    <text evidence="1">Lipid metabolism; phospholipid metabolism.</text>
</comment>
<comment type="subunit">
    <text evidence="1">Homodimer. Probably interacts with PlsY.</text>
</comment>
<comment type="subcellular location">
    <subcellularLocation>
        <location evidence="1">Cytoplasm</location>
    </subcellularLocation>
    <text evidence="1">Associated with the membrane possibly through PlsY.</text>
</comment>
<comment type="similarity">
    <text evidence="1">Belongs to the PlsX family.</text>
</comment>
<organism>
    <name type="scientific">Gloeobacter violaceus (strain ATCC 29082 / PCC 7421)</name>
    <dbReference type="NCBI Taxonomy" id="251221"/>
    <lineage>
        <taxon>Bacteria</taxon>
        <taxon>Bacillati</taxon>
        <taxon>Cyanobacteriota</taxon>
        <taxon>Cyanophyceae</taxon>
        <taxon>Gloeobacterales</taxon>
        <taxon>Gloeobacteraceae</taxon>
        <taxon>Gloeobacter</taxon>
    </lineage>
</organism>